<sequence>MTKYIFVTGGVVSSVGKGIGVASIGRLLKSRGLSVSVMKLDPYLNVDPGTMSPYQHGEVFVTADGAETDLDLGHYERFIDVNLSRLSNVTTGQIYSAVIAKERRGDYLGGTIQVIPHITNEIKSRIGSLARSSQADVVIVEIGGTVGDIESLPFLEAIRQMRKDVGRDNILYIHVTLLPHISTGELKTKPTQHSVMALRNVGISADIILCRADRPIDDEIREKIAFFADVDVRAVIPVPTVDSIYEVPLVLEDMGLGDYLVERLGLPATPPDLEEWRALVARIRQEKRRVPIALVGKYVELHDAYISVVEALHHAGLEQSIDIDIRWIAAEEVEREGPARLLSGVYGILVPGGFGERGIEGKIAAADYARIHGIPYLGLCLGMQCATIAFARHVLGTHDVNSTEFNPQTAHPVIDLMPDQRDITEKGGTMRLGLYPCDLVPGTRAHAAYGCDRVEERHRHRFEFNNRYRSVLEAAGLVISGISPDKRLVEIIELRDHPWYVASQFHPEFQSRPGKPHPLFRGFVAAAAQTLLAGEARQLPLVESTS</sequence>
<name>PYRG_CHLSY</name>
<reference key="1">
    <citation type="submission" date="2009-01" db="EMBL/GenBank/DDBJ databases">
        <title>Complete sequence of Chloroflexus sp. Y-400-fl.</title>
        <authorList>
            <consortium name="US DOE Joint Genome Institute"/>
            <person name="Lucas S."/>
            <person name="Copeland A."/>
            <person name="Lapidus A."/>
            <person name="Glavina del Rio T."/>
            <person name="Dalin E."/>
            <person name="Tice H."/>
            <person name="Bruce D."/>
            <person name="Goodwin L."/>
            <person name="Pitluck S."/>
            <person name="Sims D."/>
            <person name="Kiss H."/>
            <person name="Brettin T."/>
            <person name="Detter J.C."/>
            <person name="Han C."/>
            <person name="Larimer F."/>
            <person name="Land M."/>
            <person name="Hauser L."/>
            <person name="Kyrpides N."/>
            <person name="Ovchinnikova G."/>
            <person name="Bryant D.A."/>
            <person name="Richardson P."/>
        </authorList>
    </citation>
    <scope>NUCLEOTIDE SEQUENCE [LARGE SCALE GENOMIC DNA]</scope>
    <source>
        <strain>ATCC 29364 / DSM 637 / Y-400-fl</strain>
    </source>
</reference>
<evidence type="ECO:0000255" key="1">
    <source>
        <dbReference type="HAMAP-Rule" id="MF_01227"/>
    </source>
</evidence>
<comment type="function">
    <text evidence="1">Catalyzes the ATP-dependent amination of UTP to CTP with either L-glutamine or ammonia as the source of nitrogen. Regulates intracellular CTP levels through interactions with the four ribonucleotide triphosphates.</text>
</comment>
<comment type="catalytic activity">
    <reaction evidence="1">
        <text>UTP + L-glutamine + ATP + H2O = CTP + L-glutamate + ADP + phosphate + 2 H(+)</text>
        <dbReference type="Rhea" id="RHEA:26426"/>
        <dbReference type="ChEBI" id="CHEBI:15377"/>
        <dbReference type="ChEBI" id="CHEBI:15378"/>
        <dbReference type="ChEBI" id="CHEBI:29985"/>
        <dbReference type="ChEBI" id="CHEBI:30616"/>
        <dbReference type="ChEBI" id="CHEBI:37563"/>
        <dbReference type="ChEBI" id="CHEBI:43474"/>
        <dbReference type="ChEBI" id="CHEBI:46398"/>
        <dbReference type="ChEBI" id="CHEBI:58359"/>
        <dbReference type="ChEBI" id="CHEBI:456216"/>
        <dbReference type="EC" id="6.3.4.2"/>
    </reaction>
</comment>
<comment type="catalytic activity">
    <reaction evidence="1">
        <text>L-glutamine + H2O = L-glutamate + NH4(+)</text>
        <dbReference type="Rhea" id="RHEA:15889"/>
        <dbReference type="ChEBI" id="CHEBI:15377"/>
        <dbReference type="ChEBI" id="CHEBI:28938"/>
        <dbReference type="ChEBI" id="CHEBI:29985"/>
        <dbReference type="ChEBI" id="CHEBI:58359"/>
    </reaction>
</comment>
<comment type="catalytic activity">
    <reaction evidence="1">
        <text>UTP + NH4(+) + ATP = CTP + ADP + phosphate + 2 H(+)</text>
        <dbReference type="Rhea" id="RHEA:16597"/>
        <dbReference type="ChEBI" id="CHEBI:15378"/>
        <dbReference type="ChEBI" id="CHEBI:28938"/>
        <dbReference type="ChEBI" id="CHEBI:30616"/>
        <dbReference type="ChEBI" id="CHEBI:37563"/>
        <dbReference type="ChEBI" id="CHEBI:43474"/>
        <dbReference type="ChEBI" id="CHEBI:46398"/>
        <dbReference type="ChEBI" id="CHEBI:456216"/>
    </reaction>
</comment>
<comment type="activity regulation">
    <text evidence="1">Allosterically activated by GTP, when glutamine is the substrate; GTP has no effect on the reaction when ammonia is the substrate. The allosteric effector GTP functions by stabilizing the protein conformation that binds the tetrahedral intermediate(s) formed during glutamine hydrolysis. Inhibited by the product CTP, via allosteric rather than competitive inhibition.</text>
</comment>
<comment type="pathway">
    <text evidence="1">Pyrimidine metabolism; CTP biosynthesis via de novo pathway; CTP from UDP: step 2/2.</text>
</comment>
<comment type="subunit">
    <text evidence="1">Homotetramer.</text>
</comment>
<comment type="miscellaneous">
    <text evidence="1">CTPSs have evolved a hybrid strategy for distinguishing between UTP and CTP. The overlapping regions of the product feedback inhibitory and substrate sites recognize a common feature in both compounds, the triphosphate moiety. To differentiate isosteric substrate and product pyrimidine rings, an additional pocket far from the expected kinase/ligase catalytic site, specifically recognizes the cytosine and ribose portions of the product inhibitor.</text>
</comment>
<comment type="similarity">
    <text evidence="1">Belongs to the CTP synthase family.</text>
</comment>
<feature type="chain" id="PRO_1000164935" description="CTP synthase">
    <location>
        <begin position="1"/>
        <end position="546"/>
    </location>
</feature>
<feature type="domain" description="Glutamine amidotransferase type-1" evidence="1">
    <location>
        <begin position="291"/>
        <end position="533"/>
    </location>
</feature>
<feature type="region of interest" description="Amidoligase domain" evidence="1">
    <location>
        <begin position="1"/>
        <end position="266"/>
    </location>
</feature>
<feature type="active site" description="Nucleophile; for glutamine hydrolysis" evidence="1">
    <location>
        <position position="380"/>
    </location>
</feature>
<feature type="active site" evidence="1">
    <location>
        <position position="506"/>
    </location>
</feature>
<feature type="active site" evidence="1">
    <location>
        <position position="508"/>
    </location>
</feature>
<feature type="binding site" evidence="1">
    <location>
        <position position="13"/>
    </location>
    <ligand>
        <name>CTP</name>
        <dbReference type="ChEBI" id="CHEBI:37563"/>
        <note>allosteric inhibitor</note>
    </ligand>
</feature>
<feature type="binding site" evidence="1">
    <location>
        <position position="13"/>
    </location>
    <ligand>
        <name>UTP</name>
        <dbReference type="ChEBI" id="CHEBI:46398"/>
    </ligand>
</feature>
<feature type="binding site" evidence="1">
    <location>
        <begin position="14"/>
        <end position="19"/>
    </location>
    <ligand>
        <name>ATP</name>
        <dbReference type="ChEBI" id="CHEBI:30616"/>
    </ligand>
</feature>
<feature type="binding site" evidence="1">
    <location>
        <position position="54"/>
    </location>
    <ligand>
        <name>L-glutamine</name>
        <dbReference type="ChEBI" id="CHEBI:58359"/>
    </ligand>
</feature>
<feature type="binding site" evidence="1">
    <location>
        <position position="71"/>
    </location>
    <ligand>
        <name>ATP</name>
        <dbReference type="ChEBI" id="CHEBI:30616"/>
    </ligand>
</feature>
<feature type="binding site" evidence="1">
    <location>
        <position position="71"/>
    </location>
    <ligand>
        <name>Mg(2+)</name>
        <dbReference type="ChEBI" id="CHEBI:18420"/>
    </ligand>
</feature>
<feature type="binding site" evidence="1">
    <location>
        <position position="141"/>
    </location>
    <ligand>
        <name>Mg(2+)</name>
        <dbReference type="ChEBI" id="CHEBI:18420"/>
    </ligand>
</feature>
<feature type="binding site" evidence="1">
    <location>
        <begin position="148"/>
        <end position="150"/>
    </location>
    <ligand>
        <name>CTP</name>
        <dbReference type="ChEBI" id="CHEBI:37563"/>
        <note>allosteric inhibitor</note>
    </ligand>
</feature>
<feature type="binding site" evidence="1">
    <location>
        <begin position="187"/>
        <end position="192"/>
    </location>
    <ligand>
        <name>CTP</name>
        <dbReference type="ChEBI" id="CHEBI:37563"/>
        <note>allosteric inhibitor</note>
    </ligand>
</feature>
<feature type="binding site" evidence="1">
    <location>
        <begin position="187"/>
        <end position="192"/>
    </location>
    <ligand>
        <name>UTP</name>
        <dbReference type="ChEBI" id="CHEBI:46398"/>
    </ligand>
</feature>
<feature type="binding site" evidence="1">
    <location>
        <position position="223"/>
    </location>
    <ligand>
        <name>CTP</name>
        <dbReference type="ChEBI" id="CHEBI:37563"/>
        <note>allosteric inhibitor</note>
    </ligand>
</feature>
<feature type="binding site" evidence="1">
    <location>
        <position position="223"/>
    </location>
    <ligand>
        <name>UTP</name>
        <dbReference type="ChEBI" id="CHEBI:46398"/>
    </ligand>
</feature>
<feature type="binding site" evidence="1">
    <location>
        <position position="353"/>
    </location>
    <ligand>
        <name>L-glutamine</name>
        <dbReference type="ChEBI" id="CHEBI:58359"/>
    </ligand>
</feature>
<feature type="binding site" evidence="1">
    <location>
        <begin position="381"/>
        <end position="384"/>
    </location>
    <ligand>
        <name>L-glutamine</name>
        <dbReference type="ChEBI" id="CHEBI:58359"/>
    </ligand>
</feature>
<feature type="binding site" evidence="1">
    <location>
        <position position="404"/>
    </location>
    <ligand>
        <name>L-glutamine</name>
        <dbReference type="ChEBI" id="CHEBI:58359"/>
    </ligand>
</feature>
<feature type="binding site" evidence="1">
    <location>
        <position position="461"/>
    </location>
    <ligand>
        <name>L-glutamine</name>
        <dbReference type="ChEBI" id="CHEBI:58359"/>
    </ligand>
</feature>
<gene>
    <name evidence="1" type="primary">pyrG</name>
    <name type="ordered locus">Chy400_1229</name>
</gene>
<dbReference type="EC" id="6.3.4.2" evidence="1"/>
<dbReference type="EMBL" id="CP001364">
    <property type="protein sequence ID" value="ACM52650.1"/>
    <property type="molecule type" value="Genomic_DNA"/>
</dbReference>
<dbReference type="SMR" id="B9LB79"/>
<dbReference type="MEROPS" id="C26.964"/>
<dbReference type="KEGG" id="chl:Chy400_1229"/>
<dbReference type="HOGENOM" id="CLU_011675_5_0_0"/>
<dbReference type="OrthoDB" id="9801107at2"/>
<dbReference type="UniPathway" id="UPA00159">
    <property type="reaction ID" value="UER00277"/>
</dbReference>
<dbReference type="GO" id="GO:0005829">
    <property type="term" value="C:cytosol"/>
    <property type="evidence" value="ECO:0007669"/>
    <property type="project" value="TreeGrafter"/>
</dbReference>
<dbReference type="GO" id="GO:0005524">
    <property type="term" value="F:ATP binding"/>
    <property type="evidence" value="ECO:0007669"/>
    <property type="project" value="UniProtKB-KW"/>
</dbReference>
<dbReference type="GO" id="GO:0003883">
    <property type="term" value="F:CTP synthase activity"/>
    <property type="evidence" value="ECO:0007669"/>
    <property type="project" value="UniProtKB-UniRule"/>
</dbReference>
<dbReference type="GO" id="GO:0004359">
    <property type="term" value="F:glutaminase activity"/>
    <property type="evidence" value="ECO:0007669"/>
    <property type="project" value="RHEA"/>
</dbReference>
<dbReference type="GO" id="GO:0042802">
    <property type="term" value="F:identical protein binding"/>
    <property type="evidence" value="ECO:0007669"/>
    <property type="project" value="TreeGrafter"/>
</dbReference>
<dbReference type="GO" id="GO:0046872">
    <property type="term" value="F:metal ion binding"/>
    <property type="evidence" value="ECO:0007669"/>
    <property type="project" value="UniProtKB-KW"/>
</dbReference>
<dbReference type="GO" id="GO:0044210">
    <property type="term" value="P:'de novo' CTP biosynthetic process"/>
    <property type="evidence" value="ECO:0007669"/>
    <property type="project" value="UniProtKB-UniRule"/>
</dbReference>
<dbReference type="GO" id="GO:0019856">
    <property type="term" value="P:pyrimidine nucleobase biosynthetic process"/>
    <property type="evidence" value="ECO:0007669"/>
    <property type="project" value="TreeGrafter"/>
</dbReference>
<dbReference type="CDD" id="cd03113">
    <property type="entry name" value="CTPS_N"/>
    <property type="match status" value="1"/>
</dbReference>
<dbReference type="CDD" id="cd01746">
    <property type="entry name" value="GATase1_CTP_Synthase"/>
    <property type="match status" value="1"/>
</dbReference>
<dbReference type="FunFam" id="3.40.50.300:FF:000009">
    <property type="entry name" value="CTP synthase"/>
    <property type="match status" value="1"/>
</dbReference>
<dbReference type="FunFam" id="3.40.50.880:FF:000002">
    <property type="entry name" value="CTP synthase"/>
    <property type="match status" value="1"/>
</dbReference>
<dbReference type="Gene3D" id="3.40.50.880">
    <property type="match status" value="1"/>
</dbReference>
<dbReference type="Gene3D" id="3.40.50.300">
    <property type="entry name" value="P-loop containing nucleotide triphosphate hydrolases"/>
    <property type="match status" value="1"/>
</dbReference>
<dbReference type="HAMAP" id="MF_01227">
    <property type="entry name" value="PyrG"/>
    <property type="match status" value="1"/>
</dbReference>
<dbReference type="InterPro" id="IPR029062">
    <property type="entry name" value="Class_I_gatase-like"/>
</dbReference>
<dbReference type="InterPro" id="IPR004468">
    <property type="entry name" value="CTP_synthase"/>
</dbReference>
<dbReference type="InterPro" id="IPR017456">
    <property type="entry name" value="CTP_synthase_N"/>
</dbReference>
<dbReference type="InterPro" id="IPR017926">
    <property type="entry name" value="GATASE"/>
</dbReference>
<dbReference type="InterPro" id="IPR033828">
    <property type="entry name" value="GATase1_CTP_Synthase"/>
</dbReference>
<dbReference type="InterPro" id="IPR027417">
    <property type="entry name" value="P-loop_NTPase"/>
</dbReference>
<dbReference type="NCBIfam" id="NF003792">
    <property type="entry name" value="PRK05380.1"/>
    <property type="match status" value="1"/>
</dbReference>
<dbReference type="NCBIfam" id="TIGR00337">
    <property type="entry name" value="PyrG"/>
    <property type="match status" value="1"/>
</dbReference>
<dbReference type="PANTHER" id="PTHR11550">
    <property type="entry name" value="CTP SYNTHASE"/>
    <property type="match status" value="1"/>
</dbReference>
<dbReference type="PANTHER" id="PTHR11550:SF0">
    <property type="entry name" value="CTP SYNTHASE-RELATED"/>
    <property type="match status" value="1"/>
</dbReference>
<dbReference type="Pfam" id="PF06418">
    <property type="entry name" value="CTP_synth_N"/>
    <property type="match status" value="1"/>
</dbReference>
<dbReference type="Pfam" id="PF00117">
    <property type="entry name" value="GATase"/>
    <property type="match status" value="1"/>
</dbReference>
<dbReference type="SUPFAM" id="SSF52317">
    <property type="entry name" value="Class I glutamine amidotransferase-like"/>
    <property type="match status" value="1"/>
</dbReference>
<dbReference type="SUPFAM" id="SSF52540">
    <property type="entry name" value="P-loop containing nucleoside triphosphate hydrolases"/>
    <property type="match status" value="1"/>
</dbReference>
<dbReference type="PROSITE" id="PS51273">
    <property type="entry name" value="GATASE_TYPE_1"/>
    <property type="match status" value="1"/>
</dbReference>
<accession>B9LB79</accession>
<keyword id="KW-0067">ATP-binding</keyword>
<keyword id="KW-0315">Glutamine amidotransferase</keyword>
<keyword id="KW-0436">Ligase</keyword>
<keyword id="KW-0460">Magnesium</keyword>
<keyword id="KW-0479">Metal-binding</keyword>
<keyword id="KW-0547">Nucleotide-binding</keyword>
<keyword id="KW-0665">Pyrimidine biosynthesis</keyword>
<organism>
    <name type="scientific">Chloroflexus aurantiacus (strain ATCC 29364 / DSM 637 / Y-400-fl)</name>
    <dbReference type="NCBI Taxonomy" id="480224"/>
    <lineage>
        <taxon>Bacteria</taxon>
        <taxon>Bacillati</taxon>
        <taxon>Chloroflexota</taxon>
        <taxon>Chloroflexia</taxon>
        <taxon>Chloroflexales</taxon>
        <taxon>Chloroflexineae</taxon>
        <taxon>Chloroflexaceae</taxon>
        <taxon>Chloroflexus</taxon>
    </lineage>
</organism>
<protein>
    <recommendedName>
        <fullName evidence="1">CTP synthase</fullName>
        <ecNumber evidence="1">6.3.4.2</ecNumber>
    </recommendedName>
    <alternativeName>
        <fullName evidence="1">Cytidine 5'-triphosphate synthase</fullName>
    </alternativeName>
    <alternativeName>
        <fullName evidence="1">Cytidine triphosphate synthetase</fullName>
        <shortName evidence="1">CTP synthetase</shortName>
        <shortName evidence="1">CTPS</shortName>
    </alternativeName>
    <alternativeName>
        <fullName evidence="1">UTP--ammonia ligase</fullName>
    </alternativeName>
</protein>
<proteinExistence type="inferred from homology"/>